<dbReference type="EMBL" id="AL713921">
    <property type="status" value="NOT_ANNOTATED_CDS"/>
    <property type="molecule type" value="Genomic_DNA"/>
</dbReference>
<dbReference type="CCDS" id="CCDS24513.1"/>
<dbReference type="RefSeq" id="NP_001020090.1">
    <property type="nucleotide sequence ID" value="NM_001024919.1"/>
</dbReference>
<dbReference type="SMR" id="Q5SQY2"/>
<dbReference type="BioGRID" id="213530">
    <property type="interactions" value="9"/>
</dbReference>
<dbReference type="FunCoup" id="Q5SQY2">
    <property type="interactions" value="381"/>
</dbReference>
<dbReference type="IntAct" id="Q5SQY2">
    <property type="interactions" value="8"/>
</dbReference>
<dbReference type="STRING" id="10090.ENSMUSP00000056417"/>
<dbReference type="iPTMnet" id="Q5SQY2"/>
<dbReference type="PhosphoSitePlus" id="Q5SQY2"/>
<dbReference type="PaxDb" id="10090-ENSMUSP00000056417"/>
<dbReference type="ProteomicsDB" id="273792"/>
<dbReference type="Pumba" id="Q5SQY2"/>
<dbReference type="Ensembl" id="ENSMUST00000058060.14">
    <property type="protein sequence ID" value="ENSMUSP00000056417.8"/>
    <property type="gene ID" value="ENSMUSG00000044502.17"/>
</dbReference>
<dbReference type="Ensembl" id="ENSMUST00000109415.2">
    <property type="protein sequence ID" value="ENSMUSP00000105042.2"/>
    <property type="gene ID" value="ENSMUSG00000044502.17"/>
</dbReference>
<dbReference type="GeneID" id="69556"/>
<dbReference type="KEGG" id="mmu:69556"/>
<dbReference type="UCSC" id="uc007iim.1">
    <property type="organism name" value="mouse"/>
</dbReference>
<dbReference type="AGR" id="MGI:1916806"/>
<dbReference type="CTD" id="91272"/>
<dbReference type="MGI" id="MGI:1916806">
    <property type="gene designation" value="Bod1"/>
</dbReference>
<dbReference type="VEuPathDB" id="HostDB:ENSMUSG00000044502"/>
<dbReference type="eggNOG" id="ENOG502S57W">
    <property type="taxonomic scope" value="Eukaryota"/>
</dbReference>
<dbReference type="GeneTree" id="ENSGT00940000154979"/>
<dbReference type="HOGENOM" id="CLU_139504_0_0_1"/>
<dbReference type="InParanoid" id="Q5SQY2"/>
<dbReference type="OMA" id="IICQVVD"/>
<dbReference type="OrthoDB" id="7605699at2759"/>
<dbReference type="PhylomeDB" id="Q5SQY2"/>
<dbReference type="TreeFam" id="TF325311"/>
<dbReference type="BioGRID-ORCS" id="69556">
    <property type="hits" value="7 hits in 79 CRISPR screens"/>
</dbReference>
<dbReference type="ChiTaRS" id="Bod1">
    <property type="organism name" value="mouse"/>
</dbReference>
<dbReference type="PRO" id="PR:Q5SQY2"/>
<dbReference type="Proteomes" id="UP000000589">
    <property type="component" value="Chromosome 11"/>
</dbReference>
<dbReference type="RNAct" id="Q5SQY2">
    <property type="molecule type" value="protein"/>
</dbReference>
<dbReference type="Bgee" id="ENSMUSG00000044502">
    <property type="expression patterns" value="Expressed in secondary oocyte and 230 other cell types or tissues"/>
</dbReference>
<dbReference type="GO" id="GO:0005813">
    <property type="term" value="C:centrosome"/>
    <property type="evidence" value="ECO:0007669"/>
    <property type="project" value="UniProtKB-SubCell"/>
</dbReference>
<dbReference type="GO" id="GO:0005737">
    <property type="term" value="C:cytoplasm"/>
    <property type="evidence" value="ECO:0007669"/>
    <property type="project" value="UniProtKB-KW"/>
</dbReference>
<dbReference type="GO" id="GO:0000776">
    <property type="term" value="C:kinetochore"/>
    <property type="evidence" value="ECO:0007669"/>
    <property type="project" value="UniProtKB-KW"/>
</dbReference>
<dbReference type="GO" id="GO:0051301">
    <property type="term" value="P:cell division"/>
    <property type="evidence" value="ECO:0007669"/>
    <property type="project" value="UniProtKB-KW"/>
</dbReference>
<dbReference type="InterPro" id="IPR055264">
    <property type="entry name" value="BOD1/SHG1_dom"/>
</dbReference>
<dbReference type="InterPro" id="IPR043244">
    <property type="entry name" value="BOD1L1"/>
</dbReference>
<dbReference type="PANTHER" id="PTHR47391">
    <property type="entry name" value="BIORIENTATION OF CHROMOSOMES IN CELL DIVISION 1 LIKE 1"/>
    <property type="match status" value="1"/>
</dbReference>
<dbReference type="PANTHER" id="PTHR47391:SF1">
    <property type="entry name" value="BIORIENTATION OF CHROMOSOMES IN CELL DIVISION 1 LIKE 1"/>
    <property type="match status" value="1"/>
</dbReference>
<dbReference type="Pfam" id="PF05205">
    <property type="entry name" value="COMPASS-Shg1"/>
    <property type="match status" value="1"/>
</dbReference>
<accession>Q5SQY2</accession>
<keyword id="KW-0131">Cell cycle</keyword>
<keyword id="KW-0132">Cell division</keyword>
<keyword id="KW-0137">Centromere</keyword>
<keyword id="KW-0158">Chromosome</keyword>
<keyword id="KW-0963">Cytoplasm</keyword>
<keyword id="KW-0206">Cytoskeleton</keyword>
<keyword id="KW-0995">Kinetochore</keyword>
<keyword id="KW-0498">Mitosis</keyword>
<keyword id="KW-1185">Reference proteome</keyword>
<reference key="1">
    <citation type="journal article" date="2009" name="PLoS Biol.">
        <title>Lineage-specific biology revealed by a finished genome assembly of the mouse.</title>
        <authorList>
            <person name="Church D.M."/>
            <person name="Goodstadt L."/>
            <person name="Hillier L.W."/>
            <person name="Zody M.C."/>
            <person name="Goldstein S."/>
            <person name="She X."/>
            <person name="Bult C.J."/>
            <person name="Agarwala R."/>
            <person name="Cherry J.L."/>
            <person name="DiCuccio M."/>
            <person name="Hlavina W."/>
            <person name="Kapustin Y."/>
            <person name="Meric P."/>
            <person name="Maglott D."/>
            <person name="Birtle Z."/>
            <person name="Marques A.C."/>
            <person name="Graves T."/>
            <person name="Zhou S."/>
            <person name="Teague B."/>
            <person name="Potamousis K."/>
            <person name="Churas C."/>
            <person name="Place M."/>
            <person name="Herschleb J."/>
            <person name="Runnheim R."/>
            <person name="Forrest D."/>
            <person name="Amos-Landgraf J."/>
            <person name="Schwartz D.C."/>
            <person name="Cheng Z."/>
            <person name="Lindblad-Toh K."/>
            <person name="Eichler E.E."/>
            <person name="Ponting C.P."/>
        </authorList>
    </citation>
    <scope>NUCLEOTIDE SEQUENCE [LARGE SCALE GENOMIC DNA]</scope>
    <source>
        <strain>C57BL/6J</strain>
    </source>
</reference>
<protein>
    <recommendedName>
        <fullName>Biorientation of chromosomes in cell division protein 1</fullName>
    </recommendedName>
    <alternativeName>
        <fullName>Biorientation defective protein 1</fullName>
    </alternativeName>
    <alternativeName>
        <fullName>Protein FAM44B</fullName>
    </alternativeName>
</protein>
<name>BOD1_MOUSE</name>
<sequence length="173" mass="18364">MADGAGAGAAGQASGPSGGSSGAGGPVNPASLPPGDPQLIALIVEQLKSRGLFDSFRRDCLADVDTKPAYQNLRQKVDNFVSTHLDKQEWNPAMNKNQLRNGLRQSVVQSGMLEAGVDRIISQVVDPKLNHIFRPQIERAIHEFLAAQKKEAVPAPPPEPESQDPPAPSQDAS</sequence>
<evidence type="ECO:0000250" key="1"/>
<evidence type="ECO:0000250" key="2">
    <source>
        <dbReference type="UniProtKB" id="Q96IK1"/>
    </source>
</evidence>
<evidence type="ECO:0000256" key="3">
    <source>
        <dbReference type="SAM" id="MobiDB-lite"/>
    </source>
</evidence>
<evidence type="ECO:0000305" key="4"/>
<feature type="chain" id="PRO_0000187029" description="Biorientation of chromosomes in cell division protein 1">
    <location>
        <begin position="1"/>
        <end position="173"/>
    </location>
</feature>
<feature type="region of interest" description="Disordered" evidence="3">
    <location>
        <begin position="1"/>
        <end position="35"/>
    </location>
</feature>
<feature type="region of interest" description="Disordered" evidence="3">
    <location>
        <begin position="148"/>
        <end position="173"/>
    </location>
</feature>
<feature type="compositionally biased region" description="Gly residues" evidence="3">
    <location>
        <begin position="16"/>
        <end position="25"/>
    </location>
</feature>
<feature type="compositionally biased region" description="Pro residues" evidence="3">
    <location>
        <begin position="154"/>
        <end position="173"/>
    </location>
</feature>
<proteinExistence type="inferred from homology"/>
<organism>
    <name type="scientific">Mus musculus</name>
    <name type="common">Mouse</name>
    <dbReference type="NCBI Taxonomy" id="10090"/>
    <lineage>
        <taxon>Eukaryota</taxon>
        <taxon>Metazoa</taxon>
        <taxon>Chordata</taxon>
        <taxon>Craniata</taxon>
        <taxon>Vertebrata</taxon>
        <taxon>Euteleostomi</taxon>
        <taxon>Mammalia</taxon>
        <taxon>Eutheria</taxon>
        <taxon>Euarchontoglires</taxon>
        <taxon>Glires</taxon>
        <taxon>Rodentia</taxon>
        <taxon>Myomorpha</taxon>
        <taxon>Muroidea</taxon>
        <taxon>Muridae</taxon>
        <taxon>Murinae</taxon>
        <taxon>Mus</taxon>
        <taxon>Mus</taxon>
    </lineage>
</organism>
<comment type="function">
    <text evidence="1">Required for proper chromosome biorientation through the detection or correction of syntelic attachments in mitotic spindles.</text>
</comment>
<comment type="subunit">
    <text evidence="2">Component of the SET1B complex composed of the catalytic subunit SETD1B, WDR5, WDR82, RBBP5, ASH2L/ASH2, CXXC1/CFP1, HCFC1, DPY30 homotrimer and BOD1.</text>
</comment>
<comment type="subcellular location">
    <subcellularLocation>
        <location evidence="1">Cytoplasm</location>
        <location evidence="1">Cytoskeleton</location>
        <location evidence="1">Microtubule organizing center</location>
        <location evidence="1">Centrosome</location>
    </subcellularLocation>
    <subcellularLocation>
        <location evidence="1">Chromosome</location>
        <location evidence="1">Centromere</location>
        <location evidence="1">Kinetochore</location>
    </subcellularLocation>
    <text evidence="1">Localizes at the centrosomes throughout the cell cycle, only dissociating during cytokinesis. Localizes at the kinetochore from prometaphase until anaphase.</text>
</comment>
<comment type="similarity">
    <text evidence="4">Belongs to the BOD1 family.</text>
</comment>
<gene>
    <name type="primary">Bod1</name>
    <name type="synonym">Fam44b</name>
</gene>